<sequence length="446" mass="52035">MKFRNNLTLYLIFIIVFTIYISLTISIPLKNGKFWHITDTHYDFMYIEGGDEDKQCREVTYKSKYEKGGASSIGNYKCDTSFELLQSSFEYMVKHEEKPDFIIWTGDDPPHLGNSQLNETLVLQSITNMTNLIKGYFPDIPIFPSIGNHDSYPQHQIGVGPNWLFENVAQLWSPFLSNDSIETFKLGGYYTELVSEGFRIISLNTVFYYNENRQCLNLTDPAGQLLWLNETLANASLAGERVWIIGHVPPGYNEKYDVFNFHKQFNDEYLFSFSQYSDIIEFHIYGHEHTDTFRLFYDDPNDHINDIEPTGIMFLSPSLTPWMNQFLPALPNNPGLRLYEYNITSFALLDYYQFWTNLTDNIISGNIDWQLEYRATEFFNTFNLSPVSMYEAYLLIQSVTSQLLKFHFYNSVSYPTKGCDEICKKIQLCSIRHPFTKGFKECLVEI</sequence>
<organism>
    <name type="scientific">Dictyostelium discoideum</name>
    <name type="common">Social amoeba</name>
    <dbReference type="NCBI Taxonomy" id="44689"/>
    <lineage>
        <taxon>Eukaryota</taxon>
        <taxon>Amoebozoa</taxon>
        <taxon>Evosea</taxon>
        <taxon>Eumycetozoa</taxon>
        <taxon>Dictyostelia</taxon>
        <taxon>Dictyosteliales</taxon>
        <taxon>Dictyosteliaceae</taxon>
        <taxon>Dictyostelium</taxon>
    </lineage>
</organism>
<gene>
    <name type="primary">sgmC</name>
    <name type="ORF">DDB_G0282265</name>
</gene>
<feature type="signal peptide" evidence="3">
    <location>
        <begin position="1"/>
        <end position="26"/>
    </location>
</feature>
<feature type="chain" id="PRO_0000328194" description="Sphingomyelinase phosphodiesterase C">
    <location>
        <begin position="27"/>
        <end position="446"/>
    </location>
</feature>
<feature type="binding site" evidence="2">
    <location>
        <position position="39"/>
    </location>
    <ligand>
        <name>Zn(2+)</name>
        <dbReference type="ChEBI" id="CHEBI:29105"/>
        <label>1</label>
    </ligand>
</feature>
<feature type="binding site" evidence="2">
    <location>
        <position position="41"/>
    </location>
    <ligand>
        <name>Zn(2+)</name>
        <dbReference type="ChEBI" id="CHEBI:29105"/>
        <label>1</label>
    </ligand>
</feature>
<feature type="binding site" evidence="2">
    <location>
        <position position="107"/>
    </location>
    <ligand>
        <name>Zn(2+)</name>
        <dbReference type="ChEBI" id="CHEBI:29105"/>
        <label>1</label>
    </ligand>
</feature>
<feature type="binding site" evidence="2">
    <location>
        <position position="107"/>
    </location>
    <ligand>
        <name>Zn(2+)</name>
        <dbReference type="ChEBI" id="CHEBI:29105"/>
        <label>2</label>
    </ligand>
</feature>
<feature type="binding site" evidence="2">
    <location>
        <position position="148"/>
    </location>
    <ligand>
        <name>Zn(2+)</name>
        <dbReference type="ChEBI" id="CHEBI:29105"/>
        <label>2</label>
    </ligand>
</feature>
<feature type="binding site" evidence="2">
    <location>
        <position position="247"/>
    </location>
    <ligand>
        <name>Zn(2+)</name>
        <dbReference type="ChEBI" id="CHEBI:29105"/>
        <label>2</label>
    </ligand>
</feature>
<feature type="binding site" evidence="2">
    <location>
        <position position="287"/>
    </location>
    <ligand>
        <name>Zn(2+)</name>
        <dbReference type="ChEBI" id="CHEBI:29105"/>
        <label>2</label>
    </ligand>
</feature>
<feature type="binding site" evidence="2">
    <location>
        <position position="289"/>
    </location>
    <ligand>
        <name>Zn(2+)</name>
        <dbReference type="ChEBI" id="CHEBI:29105"/>
        <label>1</label>
    </ligand>
</feature>
<feature type="glycosylation site" description="N-linked (GlcNAc...) asparagine" evidence="3">
    <location>
        <position position="6"/>
    </location>
</feature>
<feature type="glycosylation site" description="N-linked (GlcNAc...) asparagine" evidence="3">
    <location>
        <position position="118"/>
    </location>
</feature>
<feature type="glycosylation site" description="N-linked (GlcNAc...) asparagine" evidence="3">
    <location>
        <position position="128"/>
    </location>
</feature>
<feature type="glycosylation site" description="N-linked (GlcNAc...) asparagine" evidence="3">
    <location>
        <position position="178"/>
    </location>
</feature>
<feature type="glycosylation site" description="N-linked (GlcNAc...) asparagine" evidence="3">
    <location>
        <position position="217"/>
    </location>
</feature>
<feature type="glycosylation site" description="N-linked (GlcNAc...) asparagine" evidence="3">
    <location>
        <position position="229"/>
    </location>
</feature>
<feature type="glycosylation site" description="N-linked (GlcNAc...) asparagine" evidence="3">
    <location>
        <position position="234"/>
    </location>
</feature>
<feature type="glycosylation site" description="N-linked (GlcNAc...) asparagine" evidence="3">
    <location>
        <position position="342"/>
    </location>
</feature>
<feature type="glycosylation site" description="N-linked (GlcNAc...) asparagine" evidence="3">
    <location>
        <position position="357"/>
    </location>
</feature>
<feature type="disulfide bond" evidence="2">
    <location>
        <begin position="56"/>
        <end position="78"/>
    </location>
</feature>
<feature type="disulfide bond" evidence="2">
    <location>
        <begin position="429"/>
        <end position="442"/>
    </location>
</feature>
<proteinExistence type="inferred from homology"/>
<evidence type="ECO:0000250" key="1"/>
<evidence type="ECO:0000250" key="2">
    <source>
        <dbReference type="UniProtKB" id="Q92484"/>
    </source>
</evidence>
<evidence type="ECO:0000255" key="3"/>
<evidence type="ECO:0000305" key="4"/>
<comment type="cofactor">
    <cofactor evidence="2">
        <name>Zn(2+)</name>
        <dbReference type="ChEBI" id="CHEBI:29105"/>
    </cofactor>
    <text evidence="2">Binds 2 Zn(2+) per subunit.</text>
</comment>
<comment type="subcellular location">
    <subcellularLocation>
        <location evidence="1">Secreted</location>
    </subcellularLocation>
</comment>
<comment type="similarity">
    <text evidence="4">Belongs to the acid sphingomyelinase family.</text>
</comment>
<reference key="1">
    <citation type="journal article" date="2005" name="Nature">
        <title>The genome of the social amoeba Dictyostelium discoideum.</title>
        <authorList>
            <person name="Eichinger L."/>
            <person name="Pachebat J.A."/>
            <person name="Gloeckner G."/>
            <person name="Rajandream M.A."/>
            <person name="Sucgang R."/>
            <person name="Berriman M."/>
            <person name="Song J."/>
            <person name="Olsen R."/>
            <person name="Szafranski K."/>
            <person name="Xu Q."/>
            <person name="Tunggal B."/>
            <person name="Kummerfeld S."/>
            <person name="Madera M."/>
            <person name="Konfortov B.A."/>
            <person name="Rivero F."/>
            <person name="Bankier A.T."/>
            <person name="Lehmann R."/>
            <person name="Hamlin N."/>
            <person name="Davies R."/>
            <person name="Gaudet P."/>
            <person name="Fey P."/>
            <person name="Pilcher K."/>
            <person name="Chen G."/>
            <person name="Saunders D."/>
            <person name="Sodergren E.J."/>
            <person name="Davis P."/>
            <person name="Kerhornou A."/>
            <person name="Nie X."/>
            <person name="Hall N."/>
            <person name="Anjard C."/>
            <person name="Hemphill L."/>
            <person name="Bason N."/>
            <person name="Farbrother P."/>
            <person name="Desany B."/>
            <person name="Just E."/>
            <person name="Morio T."/>
            <person name="Rost R."/>
            <person name="Churcher C.M."/>
            <person name="Cooper J."/>
            <person name="Haydock S."/>
            <person name="van Driessche N."/>
            <person name="Cronin A."/>
            <person name="Goodhead I."/>
            <person name="Muzny D.M."/>
            <person name="Mourier T."/>
            <person name="Pain A."/>
            <person name="Lu M."/>
            <person name="Harper D."/>
            <person name="Lindsay R."/>
            <person name="Hauser H."/>
            <person name="James K.D."/>
            <person name="Quiles M."/>
            <person name="Madan Babu M."/>
            <person name="Saito T."/>
            <person name="Buchrieser C."/>
            <person name="Wardroper A."/>
            <person name="Felder M."/>
            <person name="Thangavelu M."/>
            <person name="Johnson D."/>
            <person name="Knights A."/>
            <person name="Loulseged H."/>
            <person name="Mungall K.L."/>
            <person name="Oliver K."/>
            <person name="Price C."/>
            <person name="Quail M.A."/>
            <person name="Urushihara H."/>
            <person name="Hernandez J."/>
            <person name="Rabbinowitsch E."/>
            <person name="Steffen D."/>
            <person name="Sanders M."/>
            <person name="Ma J."/>
            <person name="Kohara Y."/>
            <person name="Sharp S."/>
            <person name="Simmonds M.N."/>
            <person name="Spiegler S."/>
            <person name="Tivey A."/>
            <person name="Sugano S."/>
            <person name="White B."/>
            <person name="Walker D."/>
            <person name="Woodward J.R."/>
            <person name="Winckler T."/>
            <person name="Tanaka Y."/>
            <person name="Shaulsky G."/>
            <person name="Schleicher M."/>
            <person name="Weinstock G.M."/>
            <person name="Rosenthal A."/>
            <person name="Cox E.C."/>
            <person name="Chisholm R.L."/>
            <person name="Gibbs R.A."/>
            <person name="Loomis W.F."/>
            <person name="Platzer M."/>
            <person name="Kay R.R."/>
            <person name="Williams J.G."/>
            <person name="Dear P.H."/>
            <person name="Noegel A.A."/>
            <person name="Barrell B.G."/>
            <person name="Kuspa A."/>
        </authorList>
    </citation>
    <scope>NUCLEOTIDE SEQUENCE [LARGE SCALE GENOMIC DNA]</scope>
    <source>
        <strain>AX4</strain>
    </source>
</reference>
<name>SGMC_DICDI</name>
<keyword id="KW-1015">Disulfide bond</keyword>
<keyword id="KW-0325">Glycoprotein</keyword>
<keyword id="KW-0326">Glycosidase</keyword>
<keyword id="KW-0378">Hydrolase</keyword>
<keyword id="KW-0479">Metal-binding</keyword>
<keyword id="KW-1185">Reference proteome</keyword>
<keyword id="KW-0964">Secreted</keyword>
<keyword id="KW-0732">Signal</keyword>
<keyword id="KW-0862">Zinc</keyword>
<dbReference type="EC" id="3.1.4.-"/>
<dbReference type="EMBL" id="AAFI02000046">
    <property type="protein sequence ID" value="EAL66338.1"/>
    <property type="molecule type" value="Genomic_DNA"/>
</dbReference>
<dbReference type="RefSeq" id="XP_640317.1">
    <property type="nucleotide sequence ID" value="XM_635225.1"/>
</dbReference>
<dbReference type="SMR" id="Q54SR8"/>
<dbReference type="FunCoup" id="Q54SR8">
    <property type="interactions" value="1"/>
</dbReference>
<dbReference type="GlyCosmos" id="Q54SR8">
    <property type="glycosylation" value="9 sites, No reported glycans"/>
</dbReference>
<dbReference type="GlyGen" id="Q54SR8">
    <property type="glycosylation" value="9 sites"/>
</dbReference>
<dbReference type="PaxDb" id="44689-DDB0232050"/>
<dbReference type="EnsemblProtists" id="EAL66338">
    <property type="protein sequence ID" value="EAL66338"/>
    <property type="gene ID" value="DDB_G0282265"/>
</dbReference>
<dbReference type="GeneID" id="8623493"/>
<dbReference type="KEGG" id="ddi:DDB_G0282265"/>
<dbReference type="dictyBase" id="DDB_G0282265">
    <property type="gene designation" value="sgmC"/>
</dbReference>
<dbReference type="VEuPathDB" id="AmoebaDB:DDB_G0282265"/>
<dbReference type="eggNOG" id="KOG3770">
    <property type="taxonomic scope" value="Eukaryota"/>
</dbReference>
<dbReference type="HOGENOM" id="CLU_014743_0_2_1"/>
<dbReference type="InParanoid" id="Q54SR8"/>
<dbReference type="OMA" id="PMWEASY"/>
<dbReference type="PhylomeDB" id="Q54SR8"/>
<dbReference type="PRO" id="PR:Q54SR8"/>
<dbReference type="Proteomes" id="UP000002195">
    <property type="component" value="Chromosome 3"/>
</dbReference>
<dbReference type="GO" id="GO:0005615">
    <property type="term" value="C:extracellular space"/>
    <property type="evidence" value="ECO:0000318"/>
    <property type="project" value="GO_Central"/>
</dbReference>
<dbReference type="GO" id="GO:0016020">
    <property type="term" value="C:membrane"/>
    <property type="evidence" value="ECO:0007669"/>
    <property type="project" value="GOC"/>
</dbReference>
<dbReference type="GO" id="GO:0016798">
    <property type="term" value="F:hydrolase activity, acting on glycosyl bonds"/>
    <property type="evidence" value="ECO:0007669"/>
    <property type="project" value="UniProtKB-KW"/>
</dbReference>
<dbReference type="GO" id="GO:0046872">
    <property type="term" value="F:metal ion binding"/>
    <property type="evidence" value="ECO:0007669"/>
    <property type="project" value="UniProtKB-KW"/>
</dbReference>
<dbReference type="GO" id="GO:0008081">
    <property type="term" value="F:phosphoric diester hydrolase activity"/>
    <property type="evidence" value="ECO:0000318"/>
    <property type="project" value="GO_Central"/>
</dbReference>
<dbReference type="GO" id="GO:0004767">
    <property type="term" value="F:sphingomyelin phosphodiesterase activity"/>
    <property type="evidence" value="ECO:0000250"/>
    <property type="project" value="dictyBase"/>
</dbReference>
<dbReference type="GO" id="GO:0046513">
    <property type="term" value="P:ceramide biosynthetic process"/>
    <property type="evidence" value="ECO:0000250"/>
    <property type="project" value="dictyBase"/>
</dbReference>
<dbReference type="GO" id="GO:0006685">
    <property type="term" value="P:sphingomyelin catabolic process"/>
    <property type="evidence" value="ECO:0000250"/>
    <property type="project" value="dictyBase"/>
</dbReference>
<dbReference type="CDD" id="cd00842">
    <property type="entry name" value="MPP_ASMase"/>
    <property type="match status" value="1"/>
</dbReference>
<dbReference type="FunFam" id="3.60.21.10:FF:000280">
    <property type="entry name" value="Sphingomyelinase phosphodiesterase C"/>
    <property type="match status" value="1"/>
</dbReference>
<dbReference type="Gene3D" id="3.60.21.10">
    <property type="match status" value="1"/>
</dbReference>
<dbReference type="InterPro" id="IPR017064">
    <property type="entry name" value="ASM-like_Pdiesterase_prd"/>
</dbReference>
<dbReference type="InterPro" id="IPR045473">
    <property type="entry name" value="ASM_C"/>
</dbReference>
<dbReference type="InterPro" id="IPR041805">
    <property type="entry name" value="ASMase/PPN1_MPP"/>
</dbReference>
<dbReference type="InterPro" id="IPR004843">
    <property type="entry name" value="Calcineurin-like_PHP_ApaH"/>
</dbReference>
<dbReference type="InterPro" id="IPR029052">
    <property type="entry name" value="Metallo-depent_PP-like"/>
</dbReference>
<dbReference type="PANTHER" id="PTHR10340:SF57">
    <property type="entry name" value="METALLOPHOS DOMAIN-CONTAINING PROTEIN"/>
    <property type="match status" value="1"/>
</dbReference>
<dbReference type="PANTHER" id="PTHR10340">
    <property type="entry name" value="SPHINGOMYELIN PHOSPHODIESTERASE"/>
    <property type="match status" value="1"/>
</dbReference>
<dbReference type="Pfam" id="PF19272">
    <property type="entry name" value="ASMase_C"/>
    <property type="match status" value="1"/>
</dbReference>
<dbReference type="Pfam" id="PF00149">
    <property type="entry name" value="Metallophos"/>
    <property type="match status" value="1"/>
</dbReference>
<dbReference type="PIRSF" id="PIRSF036767">
    <property type="entry name" value="ASM-like_PDE"/>
    <property type="match status" value="1"/>
</dbReference>
<dbReference type="SUPFAM" id="SSF56300">
    <property type="entry name" value="Metallo-dependent phosphatases"/>
    <property type="match status" value="1"/>
</dbReference>
<accession>Q54SR8</accession>
<protein>
    <recommendedName>
        <fullName>Sphingomyelinase phosphodiesterase C</fullName>
        <ecNumber>3.1.4.-</ecNumber>
    </recommendedName>
    <alternativeName>
        <fullName>ASM-like phosphodiesterase C</fullName>
    </alternativeName>
</protein>